<feature type="chain" id="PRO_0000212237" description="2,3-bisphosphoglycerate-independent phosphoglycerate mutase">
    <location>
        <begin position="1"/>
        <end position="508"/>
    </location>
</feature>
<feature type="active site" description="Phosphoserine intermediate" evidence="1">
    <location>
        <position position="59"/>
    </location>
</feature>
<feature type="binding site" evidence="1">
    <location>
        <position position="9"/>
    </location>
    <ligand>
        <name>Mn(2+)</name>
        <dbReference type="ChEBI" id="CHEBI:29035"/>
        <label>2</label>
    </ligand>
</feature>
<feature type="binding site" evidence="1">
    <location>
        <position position="59"/>
    </location>
    <ligand>
        <name>Mn(2+)</name>
        <dbReference type="ChEBI" id="CHEBI:29035"/>
        <label>2</label>
    </ligand>
</feature>
<feature type="binding site" evidence="1">
    <location>
        <position position="120"/>
    </location>
    <ligand>
        <name>substrate</name>
    </ligand>
</feature>
<feature type="binding site" evidence="1">
    <location>
        <begin position="149"/>
        <end position="150"/>
    </location>
    <ligand>
        <name>substrate</name>
    </ligand>
</feature>
<feature type="binding site" evidence="1">
    <location>
        <position position="181"/>
    </location>
    <ligand>
        <name>substrate</name>
    </ligand>
</feature>
<feature type="binding site" evidence="1">
    <location>
        <position position="187"/>
    </location>
    <ligand>
        <name>substrate</name>
    </ligand>
</feature>
<feature type="binding site" evidence="1">
    <location>
        <begin position="254"/>
        <end position="257"/>
    </location>
    <ligand>
        <name>substrate</name>
    </ligand>
</feature>
<feature type="binding site" evidence="1">
    <location>
        <position position="331"/>
    </location>
    <ligand>
        <name>substrate</name>
    </ligand>
</feature>
<feature type="binding site" evidence="1">
    <location>
        <position position="398"/>
    </location>
    <ligand>
        <name>Mn(2+)</name>
        <dbReference type="ChEBI" id="CHEBI:29035"/>
        <label>1</label>
    </ligand>
</feature>
<feature type="binding site" evidence="1">
    <location>
        <position position="402"/>
    </location>
    <ligand>
        <name>Mn(2+)</name>
        <dbReference type="ChEBI" id="CHEBI:29035"/>
        <label>1</label>
    </ligand>
</feature>
<feature type="binding site" evidence="1">
    <location>
        <position position="439"/>
    </location>
    <ligand>
        <name>Mn(2+)</name>
        <dbReference type="ChEBI" id="CHEBI:29035"/>
        <label>2</label>
    </ligand>
</feature>
<feature type="binding site" evidence="1">
    <location>
        <position position="440"/>
    </location>
    <ligand>
        <name>Mn(2+)</name>
        <dbReference type="ChEBI" id="CHEBI:29035"/>
        <label>2</label>
    </ligand>
</feature>
<feature type="binding site" evidence="1">
    <location>
        <position position="456"/>
    </location>
    <ligand>
        <name>Mn(2+)</name>
        <dbReference type="ChEBI" id="CHEBI:29035"/>
        <label>1</label>
    </ligand>
</feature>
<accession>Q9HNY7</accession>
<protein>
    <recommendedName>
        <fullName evidence="1">2,3-bisphosphoglycerate-independent phosphoglycerate mutase</fullName>
        <shortName evidence="1">BPG-independent PGAM</shortName>
        <shortName evidence="1">Phosphoglyceromutase</shortName>
        <shortName evidence="1">iPGM</shortName>
        <ecNumber evidence="1">5.4.2.12</ecNumber>
    </recommendedName>
</protein>
<gene>
    <name evidence="1" type="primary">gpmI</name>
    <name type="synonym">gpm</name>
    <name type="ordered locus">VNG_1887G</name>
</gene>
<keyword id="KW-0324">Glycolysis</keyword>
<keyword id="KW-0413">Isomerase</keyword>
<keyword id="KW-0464">Manganese</keyword>
<keyword id="KW-0479">Metal-binding</keyword>
<keyword id="KW-1185">Reference proteome</keyword>
<proteinExistence type="inferred from homology"/>
<reference key="1">
    <citation type="journal article" date="2000" name="Proc. Natl. Acad. Sci. U.S.A.">
        <title>Genome sequence of Halobacterium species NRC-1.</title>
        <authorList>
            <person name="Ng W.V."/>
            <person name="Kennedy S.P."/>
            <person name="Mahairas G.G."/>
            <person name="Berquist B."/>
            <person name="Pan M."/>
            <person name="Shukla H.D."/>
            <person name="Lasky S.R."/>
            <person name="Baliga N.S."/>
            <person name="Thorsson V."/>
            <person name="Sbrogna J."/>
            <person name="Swartzell S."/>
            <person name="Weir D."/>
            <person name="Hall J."/>
            <person name="Dahl T.A."/>
            <person name="Welti R."/>
            <person name="Goo Y.A."/>
            <person name="Leithauser B."/>
            <person name="Keller K."/>
            <person name="Cruz R."/>
            <person name="Danson M.J."/>
            <person name="Hough D.W."/>
            <person name="Maddocks D.G."/>
            <person name="Jablonski P.E."/>
            <person name="Krebs M.P."/>
            <person name="Angevine C.M."/>
            <person name="Dale H."/>
            <person name="Isenbarger T.A."/>
            <person name="Peck R.F."/>
            <person name="Pohlschroder M."/>
            <person name="Spudich J.L."/>
            <person name="Jung K.-H."/>
            <person name="Alam M."/>
            <person name="Freitas T."/>
            <person name="Hou S."/>
            <person name="Daniels C.J."/>
            <person name="Dennis P.P."/>
            <person name="Omer A.D."/>
            <person name="Ebhardt H."/>
            <person name="Lowe T.M."/>
            <person name="Liang P."/>
            <person name="Riley M."/>
            <person name="Hood L."/>
            <person name="DasSarma S."/>
        </authorList>
    </citation>
    <scope>NUCLEOTIDE SEQUENCE [LARGE SCALE GENOMIC DNA]</scope>
    <source>
        <strain>ATCC 700922 / JCM 11081 / NRC-1</strain>
    </source>
</reference>
<sequence length="508" mass="53179">MQAALVILDGWGLGDHDRRDAVRAADTPTFDEYAERGAFGTLTTSGRDVGLPDGQMGNSEVGHLTIGAGRVVKQAYTRIEDAIAAGDLCGNDAISGALDHVADTGGTLHVMGLVSDGGVHADQQHIHALVECAAGRGVEAAVHAFTDGRDTSPTGGEDYLADLEAVADEHGTGDVASVSGRYYAMDRDQNWARTKRAYDAITRSDGVAHHAAAAVDAVTDSYERGDTDEFVEPTTIEGGAALSDGDAVVFANFRADRARQLTRLLADIHPADWDADGIETNPPAVPVVTMTEYDETFDCPVAFPAAEPTDTLGAVLAAHDHTQLRVAESEKYAHVTYFLNGGREVAFDGETRTIVDSPDVPTYDEQPAMSAPAVTDTVLDALAGDDPDVLVLNYANPDMVGHTGDFDAAIEAVEAVDRELGRLVPALNDAGAHAFLTADHGNADDLGTPADPHTAHTFNPVPFVSLPPASGDTAAVRDGGALRDIAPTLLDVLGIDRPTVMTGASLLE</sequence>
<name>GPMI_HALSA</name>
<comment type="function">
    <text evidence="1">Catalyzes the interconversion of 2-phosphoglycerate and 3-phosphoglycerate.</text>
</comment>
<comment type="catalytic activity">
    <reaction evidence="1">
        <text>(2R)-2-phosphoglycerate = (2R)-3-phosphoglycerate</text>
        <dbReference type="Rhea" id="RHEA:15901"/>
        <dbReference type="ChEBI" id="CHEBI:58272"/>
        <dbReference type="ChEBI" id="CHEBI:58289"/>
        <dbReference type="EC" id="5.4.2.12"/>
    </reaction>
</comment>
<comment type="cofactor">
    <cofactor evidence="1">
        <name>Mn(2+)</name>
        <dbReference type="ChEBI" id="CHEBI:29035"/>
    </cofactor>
    <text evidence="1">Binds 2 manganese ions per subunit.</text>
</comment>
<comment type="pathway">
    <text evidence="1">Carbohydrate degradation; glycolysis; pyruvate from D-glyceraldehyde 3-phosphate: step 3/5.</text>
</comment>
<comment type="similarity">
    <text evidence="1">Belongs to the BPG-independent phosphoglycerate mutase family.</text>
</comment>
<organism>
    <name type="scientific">Halobacterium salinarum (strain ATCC 700922 / JCM 11081 / NRC-1)</name>
    <name type="common">Halobacterium halobium</name>
    <dbReference type="NCBI Taxonomy" id="64091"/>
    <lineage>
        <taxon>Archaea</taxon>
        <taxon>Methanobacteriati</taxon>
        <taxon>Methanobacteriota</taxon>
        <taxon>Stenosarchaea group</taxon>
        <taxon>Halobacteria</taxon>
        <taxon>Halobacteriales</taxon>
        <taxon>Halobacteriaceae</taxon>
        <taxon>Halobacterium</taxon>
        <taxon>Halobacterium salinarum NRC-34001</taxon>
    </lineage>
</organism>
<evidence type="ECO:0000255" key="1">
    <source>
        <dbReference type="HAMAP-Rule" id="MF_01038"/>
    </source>
</evidence>
<dbReference type="EC" id="5.4.2.12" evidence="1"/>
<dbReference type="EMBL" id="AE004437">
    <property type="protein sequence ID" value="AAG20083.1"/>
    <property type="molecule type" value="Genomic_DNA"/>
</dbReference>
<dbReference type="PIR" id="G84339">
    <property type="entry name" value="G84339"/>
</dbReference>
<dbReference type="RefSeq" id="WP_010903383.1">
    <property type="nucleotide sequence ID" value="NC_002607.1"/>
</dbReference>
<dbReference type="SMR" id="Q9HNY7"/>
<dbReference type="STRING" id="64091.VNG_1887G"/>
<dbReference type="PaxDb" id="64091-VNG_1887G"/>
<dbReference type="GeneID" id="68694504"/>
<dbReference type="KEGG" id="hal:VNG_1887G"/>
<dbReference type="PATRIC" id="fig|64091.14.peg.1442"/>
<dbReference type="HOGENOM" id="CLU_026099_2_0_2"/>
<dbReference type="InParanoid" id="Q9HNY7"/>
<dbReference type="OrthoDB" id="146005at2157"/>
<dbReference type="PhylomeDB" id="Q9HNY7"/>
<dbReference type="UniPathway" id="UPA00109">
    <property type="reaction ID" value="UER00186"/>
</dbReference>
<dbReference type="Proteomes" id="UP000000554">
    <property type="component" value="Chromosome"/>
</dbReference>
<dbReference type="GO" id="GO:0005737">
    <property type="term" value="C:cytoplasm"/>
    <property type="evidence" value="ECO:0007669"/>
    <property type="project" value="InterPro"/>
</dbReference>
<dbReference type="GO" id="GO:0030145">
    <property type="term" value="F:manganese ion binding"/>
    <property type="evidence" value="ECO:0000318"/>
    <property type="project" value="GO_Central"/>
</dbReference>
<dbReference type="GO" id="GO:0004619">
    <property type="term" value="F:phosphoglycerate mutase activity"/>
    <property type="evidence" value="ECO:0000318"/>
    <property type="project" value="GO_Central"/>
</dbReference>
<dbReference type="GO" id="GO:0005975">
    <property type="term" value="P:carbohydrate metabolic process"/>
    <property type="evidence" value="ECO:0000318"/>
    <property type="project" value="GO_Central"/>
</dbReference>
<dbReference type="GO" id="GO:0006007">
    <property type="term" value="P:glucose catabolic process"/>
    <property type="evidence" value="ECO:0007669"/>
    <property type="project" value="InterPro"/>
</dbReference>
<dbReference type="GO" id="GO:0006096">
    <property type="term" value="P:glycolytic process"/>
    <property type="evidence" value="ECO:0007669"/>
    <property type="project" value="UniProtKB-UniRule"/>
</dbReference>
<dbReference type="CDD" id="cd16010">
    <property type="entry name" value="iPGM"/>
    <property type="match status" value="1"/>
</dbReference>
<dbReference type="FunFam" id="3.40.1450.10:FF:000002">
    <property type="entry name" value="2,3-bisphosphoglycerate-independent phosphoglycerate mutase"/>
    <property type="match status" value="1"/>
</dbReference>
<dbReference type="Gene3D" id="3.40.720.10">
    <property type="entry name" value="Alkaline Phosphatase, subunit A"/>
    <property type="match status" value="1"/>
</dbReference>
<dbReference type="Gene3D" id="3.40.1450.10">
    <property type="entry name" value="BPG-independent phosphoglycerate mutase, domain B"/>
    <property type="match status" value="1"/>
</dbReference>
<dbReference type="HAMAP" id="MF_01038">
    <property type="entry name" value="GpmI"/>
    <property type="match status" value="1"/>
</dbReference>
<dbReference type="InterPro" id="IPR017850">
    <property type="entry name" value="Alkaline_phosphatase_core_sf"/>
</dbReference>
<dbReference type="InterPro" id="IPR011258">
    <property type="entry name" value="BPG-indep_PGM_N"/>
</dbReference>
<dbReference type="InterPro" id="IPR006124">
    <property type="entry name" value="Metalloenzyme"/>
</dbReference>
<dbReference type="InterPro" id="IPR036646">
    <property type="entry name" value="PGAM_B_sf"/>
</dbReference>
<dbReference type="InterPro" id="IPR005995">
    <property type="entry name" value="Pgm_bpd_ind"/>
</dbReference>
<dbReference type="NCBIfam" id="TIGR01307">
    <property type="entry name" value="pgm_bpd_ind"/>
    <property type="match status" value="1"/>
</dbReference>
<dbReference type="PANTHER" id="PTHR31637">
    <property type="entry name" value="2,3-BISPHOSPHOGLYCERATE-INDEPENDENT PHOSPHOGLYCERATE MUTASE"/>
    <property type="match status" value="1"/>
</dbReference>
<dbReference type="PANTHER" id="PTHR31637:SF0">
    <property type="entry name" value="2,3-BISPHOSPHOGLYCERATE-INDEPENDENT PHOSPHOGLYCERATE MUTASE"/>
    <property type="match status" value="1"/>
</dbReference>
<dbReference type="Pfam" id="PF06415">
    <property type="entry name" value="iPGM_N"/>
    <property type="match status" value="1"/>
</dbReference>
<dbReference type="Pfam" id="PF01676">
    <property type="entry name" value="Metalloenzyme"/>
    <property type="match status" value="1"/>
</dbReference>
<dbReference type="PIRSF" id="PIRSF001492">
    <property type="entry name" value="IPGAM"/>
    <property type="match status" value="1"/>
</dbReference>
<dbReference type="SUPFAM" id="SSF64158">
    <property type="entry name" value="2,3-Bisphosphoglycerate-independent phosphoglycerate mutase, substrate-binding domain"/>
    <property type="match status" value="1"/>
</dbReference>
<dbReference type="SUPFAM" id="SSF53649">
    <property type="entry name" value="Alkaline phosphatase-like"/>
    <property type="match status" value="1"/>
</dbReference>